<gene>
    <name type="primary">ACS5</name>
</gene>
<keyword id="KW-0266">Ethylene biosynthesis</keyword>
<keyword id="KW-0292">Fruit ripening</keyword>
<keyword id="KW-0456">Lyase</keyword>
<keyword id="KW-0663">Pyridoxal phosphate</keyword>
<keyword id="KW-1185">Reference proteome</keyword>
<keyword id="KW-0949">S-adenosyl-L-methionine</keyword>
<proteinExistence type="evidence at transcript level"/>
<comment type="function">
    <text>Catalyzes the formation of 1-aminocyclopropane-1-carboxylate, a direct precursor of ethylene in higher plants.</text>
</comment>
<comment type="catalytic activity">
    <reaction>
        <text>S-adenosyl-L-methionine = 1-aminocyclopropane-1-carboxylate + S-methyl-5'-thioadenosine + H(+)</text>
        <dbReference type="Rhea" id="RHEA:21744"/>
        <dbReference type="ChEBI" id="CHEBI:15378"/>
        <dbReference type="ChEBI" id="CHEBI:17509"/>
        <dbReference type="ChEBI" id="CHEBI:58360"/>
        <dbReference type="ChEBI" id="CHEBI:59789"/>
        <dbReference type="EC" id="4.4.1.14"/>
    </reaction>
</comment>
<comment type="cofactor">
    <cofactor>
        <name>pyridoxal 5'-phosphate</name>
        <dbReference type="ChEBI" id="CHEBI:597326"/>
    </cofactor>
</comment>
<comment type="pathway">
    <text>Alkene biosynthesis; ethylene biosynthesis via S-adenosyl-L-methionine; ethylene from S-adenosyl-L-methionine: step 1/2.</text>
</comment>
<comment type="subunit">
    <text>Homodimer.</text>
</comment>
<comment type="induction">
    <text>Hormones, such as auxin, environmental factors, such as mechanical wounding and a number of chemicals.</text>
</comment>
<comment type="similarity">
    <text evidence="2">Belongs to the class-I pyridoxal-phosphate-dependent aminotransferase family.</text>
</comment>
<sequence>QMGLAENQLTSDLVEDWILNNPEASICTPEGINDFRAIANFQDYHGLAEFRNAVAKFMARTRGNRITFDPDRIVMSGGATGAHEVTAFCLADPGEAFLVPIPYYPGFDRDLRWRTGVKLVPVMCDSSNNFVLTKEALEDAYEKAREDNIRVKGLLITNPSNPLGTIMDRKTLRTVVSFINEKRIHLVCDEIYAATVFSQPGFISIAEILEDETDIECDRNLVHIVYSLSKDMGFPGFRVGIIYSYNDAVVNCARKMSSFGLVSTQTQYLLASMLNDDEFVERFLAESAKRLAQRFRVFTGGLAKVGIKCLQSNAGLFVWMDLRQLLKKPTFDSETELWKVIIHEVKINVSPGYSFHCTEPGWFRVCFA</sequence>
<organism>
    <name type="scientific">Vigna radiata var. radiata</name>
    <name type="common">Mung bean</name>
    <name type="synonym">Phaseolus aureus</name>
    <dbReference type="NCBI Taxonomy" id="3916"/>
    <lineage>
        <taxon>Eukaryota</taxon>
        <taxon>Viridiplantae</taxon>
        <taxon>Streptophyta</taxon>
        <taxon>Embryophyta</taxon>
        <taxon>Tracheophyta</taxon>
        <taxon>Spermatophyta</taxon>
        <taxon>Magnoliopsida</taxon>
        <taxon>eudicotyledons</taxon>
        <taxon>Gunneridae</taxon>
        <taxon>Pentapetalae</taxon>
        <taxon>rosids</taxon>
        <taxon>fabids</taxon>
        <taxon>Fabales</taxon>
        <taxon>Fabaceae</taxon>
        <taxon>Papilionoideae</taxon>
        <taxon>50 kb inversion clade</taxon>
        <taxon>NPAAA clade</taxon>
        <taxon>indigoferoid/millettioid clade</taxon>
        <taxon>Phaseoleae</taxon>
        <taxon>Vigna</taxon>
    </lineage>
</organism>
<reference key="1">
    <citation type="journal article" date="1992" name="Plant Mol. Biol.">
        <title>Identification and characterization of a full-length cDNA encoding for an auxin-induced 1-aminocyclopropane-1-carboxylate synthase from etiolated mung bean hypocotyl segments and expression of its mRNA in response to indole-3-acetic acid.</title>
        <authorList>
            <person name="Botella J.R."/>
            <person name="Arteca J.M."/>
            <person name="Schlagnhaufer C.D."/>
            <person name="Arteca R.N."/>
            <person name="Phillips A.T."/>
        </authorList>
    </citation>
    <scope>NUCLEOTIDE SEQUENCE [MRNA]</scope>
    <source>
        <strain>cv. Berken / Rwilcz</strain>
        <tissue>Hypocotyl</tissue>
    </source>
</reference>
<feature type="chain" id="PRO_0000123917" description="1-aminocyclopropane-1-carboxylate synthase">
    <location>
        <begin position="1" status="less than"/>
        <end position="368" status="greater than"/>
    </location>
</feature>
<feature type="modified residue" description="N6-(pyridoxal phosphate)lysine" evidence="1">
    <location>
        <position position="230"/>
    </location>
</feature>
<feature type="non-terminal residue">
    <location>
        <position position="1"/>
    </location>
</feature>
<feature type="non-terminal residue">
    <location>
        <position position="368"/>
    </location>
</feature>
<name>1A1C_VIGRR</name>
<accession>Q01912</accession>
<dbReference type="EC" id="4.4.1.14"/>
<dbReference type="EMBL" id="Z11562">
    <property type="protein sequence ID" value="CAA77655.1"/>
    <property type="molecule type" value="mRNA"/>
</dbReference>
<dbReference type="SMR" id="Q01912"/>
<dbReference type="STRING" id="3916.Q01912"/>
<dbReference type="SABIO-RK" id="Q01912"/>
<dbReference type="UniPathway" id="UPA00384">
    <property type="reaction ID" value="UER00562"/>
</dbReference>
<dbReference type="Proteomes" id="UP000087766">
    <property type="component" value="Unplaced"/>
</dbReference>
<dbReference type="GO" id="GO:0016847">
    <property type="term" value="F:1-aminocyclopropane-1-carboxylate synthase activity"/>
    <property type="evidence" value="ECO:0007669"/>
    <property type="project" value="UniProtKB-EC"/>
</dbReference>
<dbReference type="GO" id="GO:0030170">
    <property type="term" value="F:pyridoxal phosphate binding"/>
    <property type="evidence" value="ECO:0007669"/>
    <property type="project" value="InterPro"/>
</dbReference>
<dbReference type="GO" id="GO:0008483">
    <property type="term" value="F:transaminase activity"/>
    <property type="evidence" value="ECO:0007669"/>
    <property type="project" value="TreeGrafter"/>
</dbReference>
<dbReference type="GO" id="GO:0009693">
    <property type="term" value="P:ethylene biosynthetic process"/>
    <property type="evidence" value="ECO:0007669"/>
    <property type="project" value="UniProtKB-UniPathway"/>
</dbReference>
<dbReference type="GO" id="GO:0009835">
    <property type="term" value="P:fruit ripening"/>
    <property type="evidence" value="ECO:0007669"/>
    <property type="project" value="UniProtKB-KW"/>
</dbReference>
<dbReference type="CDD" id="cd00609">
    <property type="entry name" value="AAT_like"/>
    <property type="match status" value="1"/>
</dbReference>
<dbReference type="Gene3D" id="3.90.1150.10">
    <property type="entry name" value="Aspartate Aminotransferase, domain 1"/>
    <property type="match status" value="1"/>
</dbReference>
<dbReference type="Gene3D" id="3.40.640.10">
    <property type="entry name" value="Type I PLP-dependent aspartate aminotransferase-like (Major domain)"/>
    <property type="match status" value="1"/>
</dbReference>
<dbReference type="InterPro" id="IPR004839">
    <property type="entry name" value="Aminotransferase_I/II_large"/>
</dbReference>
<dbReference type="InterPro" id="IPR050478">
    <property type="entry name" value="Ethylene_sulfur-biosynth"/>
</dbReference>
<dbReference type="InterPro" id="IPR004838">
    <property type="entry name" value="NHTrfase_class1_PyrdxlP-BS"/>
</dbReference>
<dbReference type="InterPro" id="IPR015424">
    <property type="entry name" value="PyrdxlP-dep_Trfase"/>
</dbReference>
<dbReference type="InterPro" id="IPR015421">
    <property type="entry name" value="PyrdxlP-dep_Trfase_major"/>
</dbReference>
<dbReference type="InterPro" id="IPR015422">
    <property type="entry name" value="PyrdxlP-dep_Trfase_small"/>
</dbReference>
<dbReference type="PANTHER" id="PTHR43795:SF6">
    <property type="entry name" value="1-AMINOCYCLOPROPANE-1-CARBOXYLATE SYNTHASE 6"/>
    <property type="match status" value="1"/>
</dbReference>
<dbReference type="PANTHER" id="PTHR43795">
    <property type="entry name" value="BIFUNCTIONAL ASPARTATE AMINOTRANSFERASE AND GLUTAMATE/ASPARTATE-PREPHENATE AMINOTRANSFERASE-RELATED"/>
    <property type="match status" value="1"/>
</dbReference>
<dbReference type="Pfam" id="PF00155">
    <property type="entry name" value="Aminotran_1_2"/>
    <property type="match status" value="1"/>
</dbReference>
<dbReference type="PRINTS" id="PR00753">
    <property type="entry name" value="ACCSYNTHASE"/>
</dbReference>
<dbReference type="SUPFAM" id="SSF53383">
    <property type="entry name" value="PLP-dependent transferases"/>
    <property type="match status" value="1"/>
</dbReference>
<dbReference type="PROSITE" id="PS00105">
    <property type="entry name" value="AA_TRANSFER_CLASS_1"/>
    <property type="match status" value="1"/>
</dbReference>
<protein>
    <recommendedName>
        <fullName>1-aminocyclopropane-1-carboxylate synthase</fullName>
        <shortName>ACC synthase</shortName>
        <ecNumber>4.4.1.14</ecNumber>
    </recommendedName>
    <alternativeName>
        <fullName>S-adenosyl-L-methionine methylthioadenosine-lyase</fullName>
    </alternativeName>
</protein>
<evidence type="ECO:0000250" key="1"/>
<evidence type="ECO:0000305" key="2"/>